<keyword id="KW-0158">Chromosome</keyword>
<keyword id="KW-0903">Direct protein sequencing</keyword>
<keyword id="KW-0238">DNA-binding</keyword>
<keyword id="KW-0539">Nucleus</keyword>
<keyword id="KW-0677">Repeat</keyword>
<feature type="chain" id="PRO_0000196013" description="Histone H1-like protein EM6">
    <location>
        <begin position="1"/>
        <end position="101" status="greater than"/>
    </location>
</feature>
<feature type="repeat" description="1">
    <location>
        <begin position="3"/>
        <end position="4"/>
    </location>
</feature>
<feature type="repeat" description="2">
    <location>
        <begin position="5"/>
        <end position="6"/>
    </location>
</feature>
<feature type="repeat" description="3">
    <location>
        <begin position="7"/>
        <end position="8"/>
    </location>
</feature>
<feature type="repeat" description="4">
    <location>
        <begin position="9"/>
        <end position="10"/>
    </location>
</feature>
<feature type="repeat" description="5; approximate">
    <location>
        <begin position="11"/>
        <end position="12"/>
    </location>
</feature>
<feature type="repeat" description="6">
    <location>
        <begin position="13"/>
        <end position="14"/>
    </location>
</feature>
<feature type="repeat" description="7">
    <location>
        <begin position="15"/>
        <end position="16"/>
    </location>
</feature>
<feature type="repeat" description="8">
    <location>
        <begin position="17"/>
        <end position="18"/>
    </location>
</feature>
<feature type="repeat" description="9">
    <location>
        <begin position="19"/>
        <end position="20"/>
    </location>
</feature>
<feature type="repeat" description="10">
    <location>
        <begin position="21"/>
        <end position="22"/>
    </location>
</feature>
<feature type="region of interest" description="Disordered" evidence="1">
    <location>
        <begin position="1"/>
        <end position="101"/>
    </location>
</feature>
<feature type="region of interest" description="10 X 2 AA approximate tandem repeats of [SK]-R">
    <location>
        <begin position="3"/>
        <end position="22"/>
    </location>
</feature>
<feature type="region of interest" description="Globular">
    <location>
        <begin position="32"/>
        <end position="65"/>
    </location>
</feature>
<feature type="compositionally biased region" description="Basic residues" evidence="1">
    <location>
        <begin position="1"/>
        <end position="35"/>
    </location>
</feature>
<feature type="compositionally biased region" description="Basic residues" evidence="1">
    <location>
        <begin position="58"/>
        <end position="101"/>
    </location>
</feature>
<feature type="non-consecutive residues" evidence="2">
    <location>
        <begin position="31"/>
        <end position="32"/>
    </location>
</feature>
<feature type="non-terminal residue">
    <location>
        <position position="101"/>
    </location>
</feature>
<accession>P27204</accession>
<protein>
    <recommendedName>
        <fullName>Histone H1-like protein EM6</fullName>
    </recommendedName>
</protein>
<sequence>AKKRSRSRKRSASRKRSRSRKRSASKKSSKKHVRKALAAGMKNHLLAHPKGSNNFILAKKKAPRRRRRVAKKVKKAPPKARRRVRVAKSRRSRTARSRRRR</sequence>
<organism>
    <name type="scientific">Ensis minor</name>
    <name type="common">Razor shell</name>
    <name type="synonym">Minor jackknife clam</name>
    <dbReference type="NCBI Taxonomy" id="6587"/>
    <lineage>
        <taxon>Eukaryota</taxon>
        <taxon>Metazoa</taxon>
        <taxon>Spiralia</taxon>
        <taxon>Lophotrochozoa</taxon>
        <taxon>Mollusca</taxon>
        <taxon>Bivalvia</taxon>
        <taxon>Autobranchia</taxon>
        <taxon>Heteroconchia</taxon>
        <taxon>Euheterodonta</taxon>
        <taxon>Imparidentia</taxon>
        <taxon>Adapedonta</taxon>
        <taxon>Solenoidea</taxon>
        <taxon>Pharidae</taxon>
        <taxon>Ensis</taxon>
    </lineage>
</organism>
<name>H1L6_ENSMI</name>
<evidence type="ECO:0000256" key="1">
    <source>
        <dbReference type="SAM" id="MobiDB-lite"/>
    </source>
</evidence>
<evidence type="ECO:0000305" key="2"/>
<dbReference type="PIR" id="S21225">
    <property type="entry name" value="S21225"/>
</dbReference>
<dbReference type="SMR" id="P27204"/>
<dbReference type="GO" id="GO:0005694">
    <property type="term" value="C:chromosome"/>
    <property type="evidence" value="ECO:0007669"/>
    <property type="project" value="UniProtKB-SubCell"/>
</dbReference>
<dbReference type="GO" id="GO:0005634">
    <property type="term" value="C:nucleus"/>
    <property type="evidence" value="ECO:0007669"/>
    <property type="project" value="UniProtKB-SubCell"/>
</dbReference>
<dbReference type="GO" id="GO:0003677">
    <property type="term" value="F:DNA binding"/>
    <property type="evidence" value="ECO:0007669"/>
    <property type="project" value="UniProtKB-KW"/>
</dbReference>
<reference key="1">
    <citation type="journal article" date="1992" name="Biochim. Biophys. Acta">
        <title>Molluscan sperm proteins: Ensis minor.</title>
        <authorList>
            <person name="Giancotti V."/>
            <person name="Buratti E."/>
            <person name="Santucci A."/>
            <person name="Neri P."/>
            <person name="Crane-Robinson C."/>
        </authorList>
    </citation>
    <scope>PROTEIN SEQUENCE</scope>
    <source>
        <tissue>Sperm</tissue>
    </source>
</reference>
<comment type="subcellular location">
    <subcellularLocation>
        <location>Nucleus</location>
    </subcellularLocation>
    <subcellularLocation>
        <location>Chromosome</location>
    </subcellularLocation>
</comment>
<comment type="tissue specificity">
    <text>Sperm.</text>
</comment>
<proteinExistence type="evidence at protein level"/>